<sequence>MALKKYKPITNGRRNMTSLDFAEITKTTPEKSLLQPLPKRAGRNNQGKLTVRHHGGGHKRQYRVIDFKRNKDGINAKVDSIQYDPNRSANIALLVYADGEKRYIIAPKNLKVGQVLESGEEADIKVGNALPLQFIPVGTVIHNIELKPGKGGQIARSAGASAQVLGKEGKYVLIRLRSGEVRMILSTCRATIGQVGNIQHELVNVGKAGRSRWKGIRPTVRGSVMNPNDHPHGGGEGRAPIGRPSPMSPWGKPTLGKKTRRGKKSSDKLIVRGRKKK</sequence>
<gene>
    <name evidence="1" type="primary">rplB</name>
    <name type="ordered locus">SSP0666</name>
</gene>
<organism>
    <name type="scientific">Staphylococcus saprophyticus subsp. saprophyticus (strain ATCC 15305 / DSM 20229 / NCIMB 8711 / NCTC 7292 / S-41)</name>
    <dbReference type="NCBI Taxonomy" id="342451"/>
    <lineage>
        <taxon>Bacteria</taxon>
        <taxon>Bacillati</taxon>
        <taxon>Bacillota</taxon>
        <taxon>Bacilli</taxon>
        <taxon>Bacillales</taxon>
        <taxon>Staphylococcaceae</taxon>
        <taxon>Staphylococcus</taxon>
    </lineage>
</organism>
<name>RL2_STAS1</name>
<proteinExistence type="inferred from homology"/>
<dbReference type="EMBL" id="AP008934">
    <property type="protein sequence ID" value="BAE17811.1"/>
    <property type="molecule type" value="Genomic_DNA"/>
</dbReference>
<dbReference type="RefSeq" id="WP_011302600.1">
    <property type="nucleotide sequence ID" value="NZ_MTGA01000036.1"/>
</dbReference>
<dbReference type="SMR" id="Q49ZG5"/>
<dbReference type="GeneID" id="3615965"/>
<dbReference type="KEGG" id="ssp:SSP0666"/>
<dbReference type="PATRIC" id="fig|342451.11.peg.668"/>
<dbReference type="eggNOG" id="COG0090">
    <property type="taxonomic scope" value="Bacteria"/>
</dbReference>
<dbReference type="HOGENOM" id="CLU_036235_2_1_9"/>
<dbReference type="OrthoDB" id="9778722at2"/>
<dbReference type="Proteomes" id="UP000006371">
    <property type="component" value="Chromosome"/>
</dbReference>
<dbReference type="GO" id="GO:0015934">
    <property type="term" value="C:large ribosomal subunit"/>
    <property type="evidence" value="ECO:0007669"/>
    <property type="project" value="InterPro"/>
</dbReference>
<dbReference type="GO" id="GO:0019843">
    <property type="term" value="F:rRNA binding"/>
    <property type="evidence" value="ECO:0007669"/>
    <property type="project" value="UniProtKB-UniRule"/>
</dbReference>
<dbReference type="GO" id="GO:0003735">
    <property type="term" value="F:structural constituent of ribosome"/>
    <property type="evidence" value="ECO:0007669"/>
    <property type="project" value="InterPro"/>
</dbReference>
<dbReference type="GO" id="GO:0016740">
    <property type="term" value="F:transferase activity"/>
    <property type="evidence" value="ECO:0007669"/>
    <property type="project" value="InterPro"/>
</dbReference>
<dbReference type="GO" id="GO:0002181">
    <property type="term" value="P:cytoplasmic translation"/>
    <property type="evidence" value="ECO:0007669"/>
    <property type="project" value="TreeGrafter"/>
</dbReference>
<dbReference type="FunFam" id="2.30.30.30:FF:000001">
    <property type="entry name" value="50S ribosomal protein L2"/>
    <property type="match status" value="1"/>
</dbReference>
<dbReference type="FunFam" id="2.40.50.140:FF:000003">
    <property type="entry name" value="50S ribosomal protein L2"/>
    <property type="match status" value="1"/>
</dbReference>
<dbReference type="FunFam" id="4.10.950.10:FF:000001">
    <property type="entry name" value="50S ribosomal protein L2"/>
    <property type="match status" value="1"/>
</dbReference>
<dbReference type="Gene3D" id="2.30.30.30">
    <property type="match status" value="1"/>
</dbReference>
<dbReference type="Gene3D" id="2.40.50.140">
    <property type="entry name" value="Nucleic acid-binding proteins"/>
    <property type="match status" value="1"/>
</dbReference>
<dbReference type="Gene3D" id="4.10.950.10">
    <property type="entry name" value="Ribosomal protein L2, domain 3"/>
    <property type="match status" value="1"/>
</dbReference>
<dbReference type="HAMAP" id="MF_01320_B">
    <property type="entry name" value="Ribosomal_uL2_B"/>
    <property type="match status" value="1"/>
</dbReference>
<dbReference type="InterPro" id="IPR012340">
    <property type="entry name" value="NA-bd_OB-fold"/>
</dbReference>
<dbReference type="InterPro" id="IPR014722">
    <property type="entry name" value="Rib_uL2_dom2"/>
</dbReference>
<dbReference type="InterPro" id="IPR002171">
    <property type="entry name" value="Ribosomal_uL2"/>
</dbReference>
<dbReference type="InterPro" id="IPR005880">
    <property type="entry name" value="Ribosomal_uL2_bac/org-type"/>
</dbReference>
<dbReference type="InterPro" id="IPR022669">
    <property type="entry name" value="Ribosomal_uL2_C"/>
</dbReference>
<dbReference type="InterPro" id="IPR022671">
    <property type="entry name" value="Ribosomal_uL2_CS"/>
</dbReference>
<dbReference type="InterPro" id="IPR014726">
    <property type="entry name" value="Ribosomal_uL2_dom3"/>
</dbReference>
<dbReference type="InterPro" id="IPR022666">
    <property type="entry name" value="Ribosomal_uL2_RNA-bd_dom"/>
</dbReference>
<dbReference type="InterPro" id="IPR008991">
    <property type="entry name" value="Translation_prot_SH3-like_sf"/>
</dbReference>
<dbReference type="NCBIfam" id="TIGR01171">
    <property type="entry name" value="rplB_bact"/>
    <property type="match status" value="1"/>
</dbReference>
<dbReference type="PANTHER" id="PTHR13691:SF5">
    <property type="entry name" value="LARGE RIBOSOMAL SUBUNIT PROTEIN UL2M"/>
    <property type="match status" value="1"/>
</dbReference>
<dbReference type="PANTHER" id="PTHR13691">
    <property type="entry name" value="RIBOSOMAL PROTEIN L2"/>
    <property type="match status" value="1"/>
</dbReference>
<dbReference type="Pfam" id="PF00181">
    <property type="entry name" value="Ribosomal_L2"/>
    <property type="match status" value="1"/>
</dbReference>
<dbReference type="Pfam" id="PF03947">
    <property type="entry name" value="Ribosomal_L2_C"/>
    <property type="match status" value="1"/>
</dbReference>
<dbReference type="PIRSF" id="PIRSF002158">
    <property type="entry name" value="Ribosomal_L2"/>
    <property type="match status" value="1"/>
</dbReference>
<dbReference type="SMART" id="SM01383">
    <property type="entry name" value="Ribosomal_L2"/>
    <property type="match status" value="1"/>
</dbReference>
<dbReference type="SMART" id="SM01382">
    <property type="entry name" value="Ribosomal_L2_C"/>
    <property type="match status" value="1"/>
</dbReference>
<dbReference type="SUPFAM" id="SSF50249">
    <property type="entry name" value="Nucleic acid-binding proteins"/>
    <property type="match status" value="1"/>
</dbReference>
<dbReference type="SUPFAM" id="SSF50104">
    <property type="entry name" value="Translation proteins SH3-like domain"/>
    <property type="match status" value="1"/>
</dbReference>
<dbReference type="PROSITE" id="PS00467">
    <property type="entry name" value="RIBOSOMAL_L2"/>
    <property type="match status" value="1"/>
</dbReference>
<reference key="1">
    <citation type="journal article" date="2005" name="Proc. Natl. Acad. Sci. U.S.A.">
        <title>Whole genome sequence of Staphylococcus saprophyticus reveals the pathogenesis of uncomplicated urinary tract infection.</title>
        <authorList>
            <person name="Kuroda M."/>
            <person name="Yamashita A."/>
            <person name="Hirakawa H."/>
            <person name="Kumano M."/>
            <person name="Morikawa K."/>
            <person name="Higashide M."/>
            <person name="Maruyama A."/>
            <person name="Inose Y."/>
            <person name="Matoba K."/>
            <person name="Toh H."/>
            <person name="Kuhara S."/>
            <person name="Hattori M."/>
            <person name="Ohta T."/>
        </authorList>
    </citation>
    <scope>NUCLEOTIDE SEQUENCE [LARGE SCALE GENOMIC DNA]</scope>
    <source>
        <strain>ATCC 15305 / DSM 20229 / NCIMB 8711 / NCTC 7292 / S-41</strain>
    </source>
</reference>
<protein>
    <recommendedName>
        <fullName evidence="1">Large ribosomal subunit protein uL2</fullName>
    </recommendedName>
    <alternativeName>
        <fullName evidence="3">50S ribosomal protein L2</fullName>
    </alternativeName>
</protein>
<comment type="function">
    <text evidence="1">One of the primary rRNA binding proteins. Required for association of the 30S and 50S subunits to form the 70S ribosome, for tRNA binding and peptide bond formation. It has been suggested to have peptidyltransferase activity; this is somewhat controversial. Makes several contacts with the 16S rRNA in the 70S ribosome.</text>
</comment>
<comment type="subunit">
    <text evidence="1">Part of the 50S ribosomal subunit. Forms a bridge to the 30S subunit in the 70S ribosome.</text>
</comment>
<comment type="similarity">
    <text evidence="1">Belongs to the universal ribosomal protein uL2 family.</text>
</comment>
<feature type="chain" id="PRO_0000129624" description="Large ribosomal subunit protein uL2">
    <location>
        <begin position="1"/>
        <end position="277"/>
    </location>
</feature>
<feature type="region of interest" description="Disordered" evidence="2">
    <location>
        <begin position="36"/>
        <end position="55"/>
    </location>
</feature>
<feature type="region of interest" description="Disordered" evidence="2">
    <location>
        <begin position="213"/>
        <end position="277"/>
    </location>
</feature>
<accession>Q49ZG5</accession>
<evidence type="ECO:0000255" key="1">
    <source>
        <dbReference type="HAMAP-Rule" id="MF_01320"/>
    </source>
</evidence>
<evidence type="ECO:0000256" key="2">
    <source>
        <dbReference type="SAM" id="MobiDB-lite"/>
    </source>
</evidence>
<evidence type="ECO:0000305" key="3"/>
<keyword id="KW-1185">Reference proteome</keyword>
<keyword id="KW-0687">Ribonucleoprotein</keyword>
<keyword id="KW-0689">Ribosomal protein</keyword>
<keyword id="KW-0694">RNA-binding</keyword>
<keyword id="KW-0699">rRNA-binding</keyword>